<protein>
    <recommendedName>
        <fullName evidence="1">Glycerol-3-phosphate dehydrogenase [NAD(P)+]</fullName>
        <ecNumber evidence="1">1.1.1.94</ecNumber>
    </recommendedName>
    <alternativeName>
        <fullName evidence="1">NAD(P)(+)-dependent glycerol-3-phosphate dehydrogenase</fullName>
    </alternativeName>
    <alternativeName>
        <fullName evidence="1">NAD(P)H-dependent dihydroxyacetone-phosphate reductase</fullName>
    </alternativeName>
</protein>
<name>GPDA_VIBCM</name>
<dbReference type="EC" id="1.1.1.94" evidence="1"/>
<dbReference type="EMBL" id="CP001233">
    <property type="protein sequence ID" value="ACP06867.1"/>
    <property type="molecule type" value="Genomic_DNA"/>
</dbReference>
<dbReference type="RefSeq" id="WP_000005325.1">
    <property type="nucleotide sequence ID" value="NC_012578.1"/>
</dbReference>
<dbReference type="SMR" id="C3LRW2"/>
<dbReference type="KEGG" id="vcm:VCM66_2571"/>
<dbReference type="HOGENOM" id="CLU_033449_0_2_6"/>
<dbReference type="UniPathway" id="UPA00940"/>
<dbReference type="Proteomes" id="UP000001217">
    <property type="component" value="Chromosome I"/>
</dbReference>
<dbReference type="GO" id="GO:0005829">
    <property type="term" value="C:cytosol"/>
    <property type="evidence" value="ECO:0007669"/>
    <property type="project" value="TreeGrafter"/>
</dbReference>
<dbReference type="GO" id="GO:0047952">
    <property type="term" value="F:glycerol-3-phosphate dehydrogenase [NAD(P)+] activity"/>
    <property type="evidence" value="ECO:0007669"/>
    <property type="project" value="UniProtKB-UniRule"/>
</dbReference>
<dbReference type="GO" id="GO:0051287">
    <property type="term" value="F:NAD binding"/>
    <property type="evidence" value="ECO:0007669"/>
    <property type="project" value="InterPro"/>
</dbReference>
<dbReference type="GO" id="GO:0005975">
    <property type="term" value="P:carbohydrate metabolic process"/>
    <property type="evidence" value="ECO:0007669"/>
    <property type="project" value="InterPro"/>
</dbReference>
<dbReference type="GO" id="GO:0046167">
    <property type="term" value="P:glycerol-3-phosphate biosynthetic process"/>
    <property type="evidence" value="ECO:0007669"/>
    <property type="project" value="UniProtKB-UniRule"/>
</dbReference>
<dbReference type="GO" id="GO:0046168">
    <property type="term" value="P:glycerol-3-phosphate catabolic process"/>
    <property type="evidence" value="ECO:0007669"/>
    <property type="project" value="InterPro"/>
</dbReference>
<dbReference type="GO" id="GO:0046474">
    <property type="term" value="P:glycerophospholipid biosynthetic process"/>
    <property type="evidence" value="ECO:0007669"/>
    <property type="project" value="TreeGrafter"/>
</dbReference>
<dbReference type="FunFam" id="1.10.1040.10:FF:000001">
    <property type="entry name" value="Glycerol-3-phosphate dehydrogenase [NAD(P)+]"/>
    <property type="match status" value="1"/>
</dbReference>
<dbReference type="FunFam" id="3.40.50.720:FF:000019">
    <property type="entry name" value="Glycerol-3-phosphate dehydrogenase [NAD(P)+]"/>
    <property type="match status" value="1"/>
</dbReference>
<dbReference type="Gene3D" id="1.10.1040.10">
    <property type="entry name" value="N-(1-d-carboxylethyl)-l-norvaline Dehydrogenase, domain 2"/>
    <property type="match status" value="1"/>
</dbReference>
<dbReference type="Gene3D" id="3.40.50.720">
    <property type="entry name" value="NAD(P)-binding Rossmann-like Domain"/>
    <property type="match status" value="1"/>
</dbReference>
<dbReference type="HAMAP" id="MF_00394">
    <property type="entry name" value="NAD_Glyc3P_dehydrog"/>
    <property type="match status" value="1"/>
</dbReference>
<dbReference type="InterPro" id="IPR008927">
    <property type="entry name" value="6-PGluconate_DH-like_C_sf"/>
</dbReference>
<dbReference type="InterPro" id="IPR013328">
    <property type="entry name" value="6PGD_dom2"/>
</dbReference>
<dbReference type="InterPro" id="IPR006168">
    <property type="entry name" value="G3P_DH_NAD-dep"/>
</dbReference>
<dbReference type="InterPro" id="IPR006109">
    <property type="entry name" value="G3P_DH_NAD-dep_C"/>
</dbReference>
<dbReference type="InterPro" id="IPR011128">
    <property type="entry name" value="G3P_DH_NAD-dep_N"/>
</dbReference>
<dbReference type="InterPro" id="IPR036291">
    <property type="entry name" value="NAD(P)-bd_dom_sf"/>
</dbReference>
<dbReference type="NCBIfam" id="NF000939">
    <property type="entry name" value="PRK00094.1-1"/>
    <property type="match status" value="1"/>
</dbReference>
<dbReference type="NCBIfam" id="NF000940">
    <property type="entry name" value="PRK00094.1-2"/>
    <property type="match status" value="1"/>
</dbReference>
<dbReference type="NCBIfam" id="NF000942">
    <property type="entry name" value="PRK00094.1-4"/>
    <property type="match status" value="1"/>
</dbReference>
<dbReference type="PANTHER" id="PTHR11728">
    <property type="entry name" value="GLYCEROL-3-PHOSPHATE DEHYDROGENASE"/>
    <property type="match status" value="1"/>
</dbReference>
<dbReference type="PANTHER" id="PTHR11728:SF1">
    <property type="entry name" value="GLYCEROL-3-PHOSPHATE DEHYDROGENASE [NAD(+)] 2, CHLOROPLASTIC"/>
    <property type="match status" value="1"/>
</dbReference>
<dbReference type="Pfam" id="PF07479">
    <property type="entry name" value="NAD_Gly3P_dh_C"/>
    <property type="match status" value="1"/>
</dbReference>
<dbReference type="Pfam" id="PF01210">
    <property type="entry name" value="NAD_Gly3P_dh_N"/>
    <property type="match status" value="1"/>
</dbReference>
<dbReference type="PIRSF" id="PIRSF000114">
    <property type="entry name" value="Glycerol-3-P_dh"/>
    <property type="match status" value="1"/>
</dbReference>
<dbReference type="PRINTS" id="PR00077">
    <property type="entry name" value="GPDHDRGNASE"/>
</dbReference>
<dbReference type="SUPFAM" id="SSF48179">
    <property type="entry name" value="6-phosphogluconate dehydrogenase C-terminal domain-like"/>
    <property type="match status" value="1"/>
</dbReference>
<dbReference type="SUPFAM" id="SSF51735">
    <property type="entry name" value="NAD(P)-binding Rossmann-fold domains"/>
    <property type="match status" value="1"/>
</dbReference>
<dbReference type="PROSITE" id="PS00957">
    <property type="entry name" value="NAD_G3PDH"/>
    <property type="match status" value="1"/>
</dbReference>
<keyword id="KW-0963">Cytoplasm</keyword>
<keyword id="KW-0444">Lipid biosynthesis</keyword>
<keyword id="KW-0443">Lipid metabolism</keyword>
<keyword id="KW-0520">NAD</keyword>
<keyword id="KW-0521">NADP</keyword>
<keyword id="KW-0547">Nucleotide-binding</keyword>
<keyword id="KW-0560">Oxidoreductase</keyword>
<keyword id="KW-0594">Phospholipid biosynthesis</keyword>
<keyword id="KW-1208">Phospholipid metabolism</keyword>
<accession>C3LRW2</accession>
<reference key="1">
    <citation type="journal article" date="2008" name="PLoS ONE">
        <title>A recalibrated molecular clock and independent origins for the cholera pandemic clones.</title>
        <authorList>
            <person name="Feng L."/>
            <person name="Reeves P.R."/>
            <person name="Lan R."/>
            <person name="Ren Y."/>
            <person name="Gao C."/>
            <person name="Zhou Z."/>
            <person name="Ren Y."/>
            <person name="Cheng J."/>
            <person name="Wang W."/>
            <person name="Wang J."/>
            <person name="Qian W."/>
            <person name="Li D."/>
            <person name="Wang L."/>
        </authorList>
    </citation>
    <scope>NUCLEOTIDE SEQUENCE [LARGE SCALE GENOMIC DNA]</scope>
    <source>
        <strain>M66-2</strain>
    </source>
</reference>
<evidence type="ECO:0000255" key="1">
    <source>
        <dbReference type="HAMAP-Rule" id="MF_00394"/>
    </source>
</evidence>
<proteinExistence type="inferred from homology"/>
<gene>
    <name evidence="1" type="primary">gpsA</name>
    <name type="ordered locus">VCM66_2571</name>
</gene>
<feature type="chain" id="PRO_1000190181" description="Glycerol-3-phosphate dehydrogenase [NAD(P)+]">
    <location>
        <begin position="1"/>
        <end position="344"/>
    </location>
</feature>
<feature type="active site" description="Proton acceptor" evidence="1">
    <location>
        <position position="203"/>
    </location>
</feature>
<feature type="binding site" evidence="1">
    <location>
        <position position="23"/>
    </location>
    <ligand>
        <name>NADPH</name>
        <dbReference type="ChEBI" id="CHEBI:57783"/>
    </ligand>
</feature>
<feature type="binding site" evidence="1">
    <location>
        <position position="24"/>
    </location>
    <ligand>
        <name>NADPH</name>
        <dbReference type="ChEBI" id="CHEBI:57783"/>
    </ligand>
</feature>
<feature type="binding site" evidence="1">
    <location>
        <position position="44"/>
    </location>
    <ligand>
        <name>NADPH</name>
        <dbReference type="ChEBI" id="CHEBI:57783"/>
    </ligand>
</feature>
<feature type="binding site" evidence="1">
    <location>
        <position position="118"/>
    </location>
    <ligand>
        <name>NADPH</name>
        <dbReference type="ChEBI" id="CHEBI:57783"/>
    </ligand>
</feature>
<feature type="binding site" evidence="1">
    <location>
        <position position="118"/>
    </location>
    <ligand>
        <name>sn-glycerol 3-phosphate</name>
        <dbReference type="ChEBI" id="CHEBI:57597"/>
    </ligand>
</feature>
<feature type="binding site" evidence="1">
    <location>
        <position position="147"/>
    </location>
    <ligand>
        <name>sn-glycerol 3-phosphate</name>
        <dbReference type="ChEBI" id="CHEBI:57597"/>
    </ligand>
</feature>
<feature type="binding site" evidence="1">
    <location>
        <position position="149"/>
    </location>
    <ligand>
        <name>sn-glycerol 3-phosphate</name>
        <dbReference type="ChEBI" id="CHEBI:57597"/>
    </ligand>
</feature>
<feature type="binding site" evidence="1">
    <location>
        <position position="151"/>
    </location>
    <ligand>
        <name>NADPH</name>
        <dbReference type="ChEBI" id="CHEBI:57783"/>
    </ligand>
</feature>
<feature type="binding site" evidence="1">
    <location>
        <position position="203"/>
    </location>
    <ligand>
        <name>sn-glycerol 3-phosphate</name>
        <dbReference type="ChEBI" id="CHEBI:57597"/>
    </ligand>
</feature>
<feature type="binding site" evidence="1">
    <location>
        <position position="256"/>
    </location>
    <ligand>
        <name>sn-glycerol 3-phosphate</name>
        <dbReference type="ChEBI" id="CHEBI:57597"/>
    </ligand>
</feature>
<feature type="binding site" evidence="1">
    <location>
        <position position="266"/>
    </location>
    <ligand>
        <name>sn-glycerol 3-phosphate</name>
        <dbReference type="ChEBI" id="CHEBI:57597"/>
    </ligand>
</feature>
<feature type="binding site" evidence="1">
    <location>
        <position position="267"/>
    </location>
    <ligand>
        <name>NADPH</name>
        <dbReference type="ChEBI" id="CHEBI:57783"/>
    </ligand>
</feature>
<feature type="binding site" evidence="1">
    <location>
        <position position="267"/>
    </location>
    <ligand>
        <name>sn-glycerol 3-phosphate</name>
        <dbReference type="ChEBI" id="CHEBI:57597"/>
    </ligand>
</feature>
<feature type="binding site" evidence="1">
    <location>
        <position position="268"/>
    </location>
    <ligand>
        <name>sn-glycerol 3-phosphate</name>
        <dbReference type="ChEBI" id="CHEBI:57597"/>
    </ligand>
</feature>
<feature type="binding site" evidence="1">
    <location>
        <position position="291"/>
    </location>
    <ligand>
        <name>NADPH</name>
        <dbReference type="ChEBI" id="CHEBI:57783"/>
    </ligand>
</feature>
<feature type="binding site" evidence="1">
    <location>
        <position position="293"/>
    </location>
    <ligand>
        <name>NADPH</name>
        <dbReference type="ChEBI" id="CHEBI:57783"/>
    </ligand>
</feature>
<sequence length="344" mass="37110">MSETQNHNSYGKPVEMTVIGAGSYGTSLAISLARNGANIVLWGHDAEHMARLDADRANHEFLPGIAFPDTLIVETDLQKAVQASRDLLVVVPSHVFGIVLKSLQPHLRADSRICWATKGLEPETGRLLQDVAHDVLGDSYPLAVLSGPTFAKELAMGMPTAISVASPDAQFVRDLQEKIHCSKTFRVYANSDFIGMQLGGAVKNVIAIGAGMSDGIGFGANARTALITRGLAEMSRLGAALGAQPETFMGMAGLGDLVLTCTDNQSRNRRFGLALGQGKDVDTAQTDIGQVVEGYRNTKEVWMLAKRMGVEMPIVEQIYQVLYQGKDARLAAQDLLARDKKMER</sequence>
<comment type="function">
    <text evidence="1">Catalyzes the reduction of the glycolytic intermediate dihydroxyacetone phosphate (DHAP) to sn-glycerol 3-phosphate (G3P), the key precursor for phospholipid synthesis.</text>
</comment>
<comment type="catalytic activity">
    <reaction evidence="1">
        <text>sn-glycerol 3-phosphate + NAD(+) = dihydroxyacetone phosphate + NADH + H(+)</text>
        <dbReference type="Rhea" id="RHEA:11092"/>
        <dbReference type="ChEBI" id="CHEBI:15378"/>
        <dbReference type="ChEBI" id="CHEBI:57540"/>
        <dbReference type="ChEBI" id="CHEBI:57597"/>
        <dbReference type="ChEBI" id="CHEBI:57642"/>
        <dbReference type="ChEBI" id="CHEBI:57945"/>
        <dbReference type="EC" id="1.1.1.94"/>
    </reaction>
    <physiologicalReaction direction="right-to-left" evidence="1">
        <dbReference type="Rhea" id="RHEA:11094"/>
    </physiologicalReaction>
</comment>
<comment type="catalytic activity">
    <reaction evidence="1">
        <text>sn-glycerol 3-phosphate + NADP(+) = dihydroxyacetone phosphate + NADPH + H(+)</text>
        <dbReference type="Rhea" id="RHEA:11096"/>
        <dbReference type="ChEBI" id="CHEBI:15378"/>
        <dbReference type="ChEBI" id="CHEBI:57597"/>
        <dbReference type="ChEBI" id="CHEBI:57642"/>
        <dbReference type="ChEBI" id="CHEBI:57783"/>
        <dbReference type="ChEBI" id="CHEBI:58349"/>
        <dbReference type="EC" id="1.1.1.94"/>
    </reaction>
    <physiologicalReaction direction="right-to-left" evidence="1">
        <dbReference type="Rhea" id="RHEA:11098"/>
    </physiologicalReaction>
</comment>
<comment type="pathway">
    <text evidence="1">Membrane lipid metabolism; glycerophospholipid metabolism.</text>
</comment>
<comment type="subcellular location">
    <subcellularLocation>
        <location evidence="1">Cytoplasm</location>
    </subcellularLocation>
</comment>
<comment type="similarity">
    <text evidence="1">Belongs to the NAD-dependent glycerol-3-phosphate dehydrogenase family.</text>
</comment>
<organism>
    <name type="scientific">Vibrio cholerae serotype O1 (strain M66-2)</name>
    <dbReference type="NCBI Taxonomy" id="579112"/>
    <lineage>
        <taxon>Bacteria</taxon>
        <taxon>Pseudomonadati</taxon>
        <taxon>Pseudomonadota</taxon>
        <taxon>Gammaproteobacteria</taxon>
        <taxon>Vibrionales</taxon>
        <taxon>Vibrionaceae</taxon>
        <taxon>Vibrio</taxon>
    </lineage>
</organism>